<sequence>MNIIFLIILFPLIGFLFLSLIQGTISERNTNIIGISSIFVSLIITFFYITGFINYSSQIFTQKLFSWISINELDIDCSLILDGLSLSMLAMILGIGLLIHIFSTWYMKDKEGYSRFFAYTNLFIASMSLLVLADNFLFMYLGWEIVSICSYLLIGFYYKTTNNTSCALKAFVFTRISDVFLIISMFLIYNKYGTFNFQEIKFLSNFLNVEDCFDLNVLTLCLLLGVMGKSAQLPLHTWLSDAMVGPTPVSALIHAATMVTAGVYLIARTHFLFLLTPKILYLISLIGIITIFISSFSALVQQDIKRILAYSTMSQIGYMFLALGVKAWTAAIVHLIVHAIFKALLFLSSGSLILSCNNEKNIFNLSKVSSKCPLLYVSFLVGGASLVSFPLITSGFYSKGNILFSVLKDGYFNLFLIGLFCSFLTSIYTFRMIFVIFHRSSVSFVFSNKRLAHNLPLLILLFFSTMFGYFIIRLPLFYVFPMVKSLENGKFLYEIISSFISFLGIFIAYHIWIKQPFWFFRFLKFKIIKLIHKFLLNGWYFDFFYKILFIHPYLFISKILSYEPFDFFPTFFVAFIKKTNSIVLKSVNGNVKCYISTMFVGINLFFILVLCSFLS</sequence>
<organism>
    <name type="scientific">Buchnera aphidicola subsp. Schizaphis graminum (strain Sg)</name>
    <dbReference type="NCBI Taxonomy" id="198804"/>
    <lineage>
        <taxon>Bacteria</taxon>
        <taxon>Pseudomonadati</taxon>
        <taxon>Pseudomonadota</taxon>
        <taxon>Gammaproteobacteria</taxon>
        <taxon>Enterobacterales</taxon>
        <taxon>Erwiniaceae</taxon>
        <taxon>Buchnera</taxon>
    </lineage>
</organism>
<proteinExistence type="inferred from homology"/>
<reference key="1">
    <citation type="journal article" date="2002" name="Science">
        <title>50 million years of genomic stasis in endosymbiotic bacteria.</title>
        <authorList>
            <person name="Tamas I."/>
            <person name="Klasson L."/>
            <person name="Canbaeck B."/>
            <person name="Naeslund A.K."/>
            <person name="Eriksson A.-S."/>
            <person name="Wernegreen J.J."/>
            <person name="Sandstroem J.P."/>
            <person name="Moran N.A."/>
            <person name="Andersson S.G.E."/>
        </authorList>
    </citation>
    <scope>NUCLEOTIDE SEQUENCE [LARGE SCALE GENOMIC DNA]</scope>
    <source>
        <strain>Sg</strain>
    </source>
</reference>
<protein>
    <recommendedName>
        <fullName>NADH-quinone oxidoreductase subunit L</fullName>
        <ecNumber>7.1.1.-</ecNumber>
    </recommendedName>
    <alternativeName>
        <fullName>NADH dehydrogenase I subunit L</fullName>
    </alternativeName>
    <alternativeName>
        <fullName>NDH-1 subunit L</fullName>
    </alternativeName>
</protein>
<accession>Q8K9X7</accession>
<keyword id="KW-1003">Cell membrane</keyword>
<keyword id="KW-0472">Membrane</keyword>
<keyword id="KW-0520">NAD</keyword>
<keyword id="KW-0874">Quinone</keyword>
<keyword id="KW-1278">Translocase</keyword>
<keyword id="KW-0812">Transmembrane</keyword>
<keyword id="KW-1133">Transmembrane helix</keyword>
<dbReference type="EC" id="7.1.1.-"/>
<dbReference type="EMBL" id="AE013218">
    <property type="protein sequence ID" value="AAM67725.1"/>
    <property type="molecule type" value="Genomic_DNA"/>
</dbReference>
<dbReference type="RefSeq" id="WP_011053692.1">
    <property type="nucleotide sequence ID" value="NC_004061.1"/>
</dbReference>
<dbReference type="SMR" id="Q8K9X7"/>
<dbReference type="STRING" id="198804.BUsg_157"/>
<dbReference type="GeneID" id="93003627"/>
<dbReference type="KEGG" id="bas:BUsg_157"/>
<dbReference type="eggNOG" id="COG1009">
    <property type="taxonomic scope" value="Bacteria"/>
</dbReference>
<dbReference type="HOGENOM" id="CLU_007100_6_2_6"/>
<dbReference type="Proteomes" id="UP000000416">
    <property type="component" value="Chromosome"/>
</dbReference>
<dbReference type="GO" id="GO:0005886">
    <property type="term" value="C:plasma membrane"/>
    <property type="evidence" value="ECO:0007669"/>
    <property type="project" value="UniProtKB-SubCell"/>
</dbReference>
<dbReference type="GO" id="GO:0008137">
    <property type="term" value="F:NADH dehydrogenase (ubiquinone) activity"/>
    <property type="evidence" value="ECO:0007669"/>
    <property type="project" value="InterPro"/>
</dbReference>
<dbReference type="GO" id="GO:0048038">
    <property type="term" value="F:quinone binding"/>
    <property type="evidence" value="ECO:0007669"/>
    <property type="project" value="UniProtKB-KW"/>
</dbReference>
<dbReference type="GO" id="GO:0042773">
    <property type="term" value="P:ATP synthesis coupled electron transport"/>
    <property type="evidence" value="ECO:0007669"/>
    <property type="project" value="InterPro"/>
</dbReference>
<dbReference type="GO" id="GO:0015990">
    <property type="term" value="P:electron transport coupled proton transport"/>
    <property type="evidence" value="ECO:0007669"/>
    <property type="project" value="TreeGrafter"/>
</dbReference>
<dbReference type="Gene3D" id="1.20.5.2700">
    <property type="match status" value="1"/>
</dbReference>
<dbReference type="InterPro" id="IPR018393">
    <property type="entry name" value="NADHpl_OxRdtase_5_subgr"/>
</dbReference>
<dbReference type="InterPro" id="IPR001750">
    <property type="entry name" value="ND/Mrp_TM"/>
</dbReference>
<dbReference type="InterPro" id="IPR003945">
    <property type="entry name" value="NU5C-like"/>
</dbReference>
<dbReference type="InterPro" id="IPR001516">
    <property type="entry name" value="Proton_antipo_N"/>
</dbReference>
<dbReference type="NCBIfam" id="TIGR01974">
    <property type="entry name" value="NDH_I_L"/>
    <property type="match status" value="1"/>
</dbReference>
<dbReference type="NCBIfam" id="NF005141">
    <property type="entry name" value="PRK06590.1"/>
    <property type="match status" value="1"/>
</dbReference>
<dbReference type="PANTHER" id="PTHR42829">
    <property type="entry name" value="NADH-UBIQUINONE OXIDOREDUCTASE CHAIN 5"/>
    <property type="match status" value="1"/>
</dbReference>
<dbReference type="PANTHER" id="PTHR42829:SF2">
    <property type="entry name" value="NADH-UBIQUINONE OXIDOREDUCTASE CHAIN 5"/>
    <property type="match status" value="1"/>
</dbReference>
<dbReference type="Pfam" id="PF00361">
    <property type="entry name" value="Proton_antipo_M"/>
    <property type="match status" value="1"/>
</dbReference>
<dbReference type="Pfam" id="PF00662">
    <property type="entry name" value="Proton_antipo_N"/>
    <property type="match status" value="1"/>
</dbReference>
<dbReference type="PRINTS" id="PR01434">
    <property type="entry name" value="NADHDHGNASE5"/>
</dbReference>
<dbReference type="PRINTS" id="PR01435">
    <property type="entry name" value="NPOXDRDTASE5"/>
</dbReference>
<feature type="chain" id="PRO_0000118215" description="NADH-quinone oxidoreductase subunit L">
    <location>
        <begin position="1"/>
        <end position="615"/>
    </location>
</feature>
<feature type="transmembrane region" description="Helical" evidence="2">
    <location>
        <begin position="1"/>
        <end position="21"/>
    </location>
</feature>
<feature type="transmembrane region" description="Helical" evidence="2">
    <location>
        <begin position="32"/>
        <end position="52"/>
    </location>
</feature>
<feature type="transmembrane region" description="Helical" evidence="2">
    <location>
        <begin position="79"/>
        <end position="99"/>
    </location>
</feature>
<feature type="transmembrane region" description="Helical" evidence="2">
    <location>
        <begin position="113"/>
        <end position="133"/>
    </location>
</feature>
<feature type="transmembrane region" description="Helical" evidence="2">
    <location>
        <begin position="136"/>
        <end position="156"/>
    </location>
</feature>
<feature type="transmembrane region" description="Helical" evidence="2">
    <location>
        <begin position="168"/>
        <end position="188"/>
    </location>
</feature>
<feature type="transmembrane region" description="Helical" evidence="2">
    <location>
        <begin position="247"/>
        <end position="267"/>
    </location>
</feature>
<feature type="transmembrane region" description="Helical" evidence="2">
    <location>
        <begin position="279"/>
        <end position="299"/>
    </location>
</feature>
<feature type="transmembrane region" description="Helical" evidence="2">
    <location>
        <begin position="327"/>
        <end position="347"/>
    </location>
</feature>
<feature type="transmembrane region" description="Helical" evidence="2">
    <location>
        <begin position="372"/>
        <end position="392"/>
    </location>
</feature>
<feature type="transmembrane region" description="Helical" evidence="2">
    <location>
        <begin position="410"/>
        <end position="430"/>
    </location>
</feature>
<feature type="transmembrane region" description="Helical" evidence="2">
    <location>
        <begin position="457"/>
        <end position="477"/>
    </location>
</feature>
<feature type="transmembrane region" description="Helical" evidence="2">
    <location>
        <begin position="491"/>
        <end position="511"/>
    </location>
</feature>
<feature type="transmembrane region" description="Helical" evidence="2">
    <location>
        <begin position="536"/>
        <end position="556"/>
    </location>
</feature>
<feature type="transmembrane region" description="Helical" evidence="2">
    <location>
        <begin position="594"/>
        <end position="614"/>
    </location>
</feature>
<evidence type="ECO:0000250" key="1"/>
<evidence type="ECO:0000255" key="2"/>
<evidence type="ECO:0000305" key="3"/>
<gene>
    <name type="primary">nuoL</name>
    <name type="ordered locus">BUsg_157</name>
</gene>
<comment type="function">
    <text evidence="1">NDH-1 shuttles electrons from NADH, via FMN and iron-sulfur (Fe-S) centers, to quinones in the respiratory chain. Couples the redox reaction to proton translocation (for every two electrons transferred, four hydrogen ions are translocated across the cytoplasmic membrane), and thus conserves the redox energy in a proton gradient (By similarity).</text>
</comment>
<comment type="catalytic activity">
    <reaction>
        <text>a quinone + NADH + 5 H(+)(in) = a quinol + NAD(+) + 4 H(+)(out)</text>
        <dbReference type="Rhea" id="RHEA:57888"/>
        <dbReference type="ChEBI" id="CHEBI:15378"/>
        <dbReference type="ChEBI" id="CHEBI:24646"/>
        <dbReference type="ChEBI" id="CHEBI:57540"/>
        <dbReference type="ChEBI" id="CHEBI:57945"/>
        <dbReference type="ChEBI" id="CHEBI:132124"/>
    </reaction>
</comment>
<comment type="subunit">
    <text evidence="1">Composed of 13 different subunits. Subunits NuoA, H, J, K, L, M, N constitute the membrane sector of the complex (By similarity).</text>
</comment>
<comment type="subcellular location">
    <subcellularLocation>
        <location evidence="3">Cell membrane</location>
        <topology evidence="3">Multi-pass membrane protein</topology>
    </subcellularLocation>
</comment>
<comment type="similarity">
    <text evidence="3">Belongs to the complex I subunit 5 family.</text>
</comment>
<name>NUOL_BUCAP</name>